<evidence type="ECO:0000255" key="1">
    <source>
        <dbReference type="HAMAP-Rule" id="MF_00358"/>
    </source>
</evidence>
<evidence type="ECO:0000305" key="2"/>
<dbReference type="EMBL" id="CP000125">
    <property type="protein sequence ID" value="ABA51870.1"/>
    <property type="molecule type" value="Genomic_DNA"/>
</dbReference>
<dbReference type="SMR" id="Q3JKA9"/>
<dbReference type="EnsemblBacteria" id="ABA51870">
    <property type="protein sequence ID" value="ABA51870"/>
    <property type="gene ID" value="BURPS1710b_A0836"/>
</dbReference>
<dbReference type="KEGG" id="bpm:BURPS1710b_A0836"/>
<dbReference type="HOGENOM" id="CLU_159258_1_2_4"/>
<dbReference type="Proteomes" id="UP000002700">
    <property type="component" value="Chromosome II"/>
</dbReference>
<dbReference type="GO" id="GO:1990904">
    <property type="term" value="C:ribonucleoprotein complex"/>
    <property type="evidence" value="ECO:0007669"/>
    <property type="project" value="UniProtKB-KW"/>
</dbReference>
<dbReference type="GO" id="GO:0005840">
    <property type="term" value="C:ribosome"/>
    <property type="evidence" value="ECO:0007669"/>
    <property type="project" value="UniProtKB-KW"/>
</dbReference>
<dbReference type="GO" id="GO:0003735">
    <property type="term" value="F:structural constituent of ribosome"/>
    <property type="evidence" value="ECO:0007669"/>
    <property type="project" value="InterPro"/>
</dbReference>
<dbReference type="GO" id="GO:0006412">
    <property type="term" value="P:translation"/>
    <property type="evidence" value="ECO:0007669"/>
    <property type="project" value="UniProtKB-UniRule"/>
</dbReference>
<dbReference type="Gene3D" id="1.20.5.1150">
    <property type="entry name" value="Ribosomal protein S8"/>
    <property type="match status" value="1"/>
</dbReference>
<dbReference type="HAMAP" id="MF_00358">
    <property type="entry name" value="Ribosomal_bS21"/>
    <property type="match status" value="1"/>
</dbReference>
<dbReference type="InterPro" id="IPR001911">
    <property type="entry name" value="Ribosomal_bS21"/>
</dbReference>
<dbReference type="InterPro" id="IPR038380">
    <property type="entry name" value="Ribosomal_bS21_sf"/>
</dbReference>
<dbReference type="NCBIfam" id="TIGR00030">
    <property type="entry name" value="S21p"/>
    <property type="match status" value="1"/>
</dbReference>
<dbReference type="PANTHER" id="PTHR21109">
    <property type="entry name" value="MITOCHONDRIAL 28S RIBOSOMAL PROTEIN S21"/>
    <property type="match status" value="1"/>
</dbReference>
<dbReference type="PANTHER" id="PTHR21109:SF22">
    <property type="entry name" value="SMALL RIBOSOMAL SUBUNIT PROTEIN BS21"/>
    <property type="match status" value="1"/>
</dbReference>
<dbReference type="Pfam" id="PF01165">
    <property type="entry name" value="Ribosomal_S21"/>
    <property type="match status" value="1"/>
</dbReference>
<dbReference type="PRINTS" id="PR00976">
    <property type="entry name" value="RIBOSOMALS21"/>
</dbReference>
<reference key="1">
    <citation type="journal article" date="2010" name="Genome Biol. Evol.">
        <title>Continuing evolution of Burkholderia mallei through genome reduction and large-scale rearrangements.</title>
        <authorList>
            <person name="Losada L."/>
            <person name="Ronning C.M."/>
            <person name="DeShazer D."/>
            <person name="Woods D."/>
            <person name="Fedorova N."/>
            <person name="Kim H.S."/>
            <person name="Shabalina S.A."/>
            <person name="Pearson T.R."/>
            <person name="Brinkac L."/>
            <person name="Tan P."/>
            <person name="Nandi T."/>
            <person name="Crabtree J."/>
            <person name="Badger J."/>
            <person name="Beckstrom-Sternberg S."/>
            <person name="Saqib M."/>
            <person name="Schutzer S.E."/>
            <person name="Keim P."/>
            <person name="Nierman W.C."/>
        </authorList>
    </citation>
    <scope>NUCLEOTIDE SEQUENCE [LARGE SCALE GENOMIC DNA]</scope>
    <source>
        <strain>1710b</strain>
    </source>
</reference>
<organism>
    <name type="scientific">Burkholderia pseudomallei (strain 1710b)</name>
    <dbReference type="NCBI Taxonomy" id="320372"/>
    <lineage>
        <taxon>Bacteria</taxon>
        <taxon>Pseudomonadati</taxon>
        <taxon>Pseudomonadota</taxon>
        <taxon>Betaproteobacteria</taxon>
        <taxon>Burkholderiales</taxon>
        <taxon>Burkholderiaceae</taxon>
        <taxon>Burkholderia</taxon>
        <taxon>pseudomallei group</taxon>
    </lineage>
</organism>
<sequence>MTIIRVKENEPFEVAMRRFKRTIEKNGLLTELRAREFYEKPTAERKRKKAAAVKRHYKRIRSQMLPKKLY</sequence>
<accession>Q3JKA9</accession>
<proteinExistence type="inferred from homology"/>
<protein>
    <recommendedName>
        <fullName evidence="1">Small ribosomal subunit protein bS21C</fullName>
    </recommendedName>
    <alternativeName>
        <fullName evidence="2">30S ribosomal protein S21 3</fullName>
    </alternativeName>
</protein>
<gene>
    <name evidence="1" type="primary">rpsU3</name>
    <name type="ordered locus">BURPS1710b_A0836</name>
</gene>
<feature type="chain" id="PRO_0000266642" description="Small ribosomal subunit protein bS21C">
    <location>
        <begin position="1"/>
        <end position="70"/>
    </location>
</feature>
<keyword id="KW-0687">Ribonucleoprotein</keyword>
<keyword id="KW-0689">Ribosomal protein</keyword>
<comment type="similarity">
    <text evidence="1">Belongs to the bacterial ribosomal protein bS21 family.</text>
</comment>
<name>RS213_BURP1</name>